<keyword id="KW-0067">ATP-binding</keyword>
<keyword id="KW-0997">Cell inner membrane</keyword>
<keyword id="KW-1003">Cell membrane</keyword>
<keyword id="KW-0472">Membrane</keyword>
<keyword id="KW-0547">Nucleotide-binding</keyword>
<keyword id="KW-0918">Phosphonate transport</keyword>
<keyword id="KW-1185">Reference proteome</keyword>
<keyword id="KW-1278">Translocase</keyword>
<keyword id="KW-0813">Transport</keyword>
<protein>
    <recommendedName>
        <fullName evidence="1">Phosphonates import ATP-binding protein PhnC</fullName>
        <ecNumber evidence="1">7.3.2.2</ecNumber>
    </recommendedName>
</protein>
<gene>
    <name evidence="1" type="primary">phnC</name>
    <name type="ordered locus">SF4117</name>
    <name type="ordered locus">S3613</name>
</gene>
<accession>Q83P97</accession>
<accession>Q7UBB5</accession>
<reference key="1">
    <citation type="journal article" date="2002" name="Nucleic Acids Res.">
        <title>Genome sequence of Shigella flexneri 2a: insights into pathogenicity through comparison with genomes of Escherichia coli K12 and O157.</title>
        <authorList>
            <person name="Jin Q."/>
            <person name="Yuan Z."/>
            <person name="Xu J."/>
            <person name="Wang Y."/>
            <person name="Shen Y."/>
            <person name="Lu W."/>
            <person name="Wang J."/>
            <person name="Liu H."/>
            <person name="Yang J."/>
            <person name="Yang F."/>
            <person name="Zhang X."/>
            <person name="Zhang J."/>
            <person name="Yang G."/>
            <person name="Wu H."/>
            <person name="Qu D."/>
            <person name="Dong J."/>
            <person name="Sun L."/>
            <person name="Xue Y."/>
            <person name="Zhao A."/>
            <person name="Gao Y."/>
            <person name="Zhu J."/>
            <person name="Kan B."/>
            <person name="Ding K."/>
            <person name="Chen S."/>
            <person name="Cheng H."/>
            <person name="Yao Z."/>
            <person name="He B."/>
            <person name="Chen R."/>
            <person name="Ma D."/>
            <person name="Qiang B."/>
            <person name="Wen Y."/>
            <person name="Hou Y."/>
            <person name="Yu J."/>
        </authorList>
    </citation>
    <scope>NUCLEOTIDE SEQUENCE [LARGE SCALE GENOMIC DNA]</scope>
    <source>
        <strain>301 / Serotype 2a</strain>
    </source>
</reference>
<reference key="2">
    <citation type="journal article" date="2003" name="Infect. Immun.">
        <title>Complete genome sequence and comparative genomics of Shigella flexneri serotype 2a strain 2457T.</title>
        <authorList>
            <person name="Wei J."/>
            <person name="Goldberg M.B."/>
            <person name="Burland V."/>
            <person name="Venkatesan M.M."/>
            <person name="Deng W."/>
            <person name="Fournier G."/>
            <person name="Mayhew G.F."/>
            <person name="Plunkett G. III"/>
            <person name="Rose D.J."/>
            <person name="Darling A."/>
            <person name="Mau B."/>
            <person name="Perna N.T."/>
            <person name="Payne S.M."/>
            <person name="Runyen-Janecky L.J."/>
            <person name="Zhou S."/>
            <person name="Schwartz D.C."/>
            <person name="Blattner F.R."/>
        </authorList>
    </citation>
    <scope>NUCLEOTIDE SEQUENCE [LARGE SCALE GENOMIC DNA]</scope>
    <source>
        <strain>ATCC 700930 / 2457T / Serotype 2a</strain>
    </source>
</reference>
<dbReference type="EC" id="7.3.2.2" evidence="1"/>
<dbReference type="EMBL" id="AE005674">
    <property type="protein sequence ID" value="AAN45542.2"/>
    <property type="molecule type" value="Genomic_DNA"/>
</dbReference>
<dbReference type="EMBL" id="AE014073">
    <property type="protein sequence ID" value="AAP18657.1"/>
    <property type="molecule type" value="Genomic_DNA"/>
</dbReference>
<dbReference type="RefSeq" id="NP_709835.2">
    <property type="nucleotide sequence ID" value="NC_004337.2"/>
</dbReference>
<dbReference type="RefSeq" id="WP_001193423.1">
    <property type="nucleotide sequence ID" value="NZ_WPGW01000049.1"/>
</dbReference>
<dbReference type="SMR" id="Q83P97"/>
<dbReference type="STRING" id="198214.SF4117"/>
<dbReference type="PaxDb" id="198214-SF4117"/>
<dbReference type="GeneID" id="1026572"/>
<dbReference type="KEGG" id="sfl:SF4117"/>
<dbReference type="KEGG" id="sfx:S3613"/>
<dbReference type="PATRIC" id="fig|198214.7.peg.4852"/>
<dbReference type="HOGENOM" id="CLU_000604_1_22_6"/>
<dbReference type="Proteomes" id="UP000001006">
    <property type="component" value="Chromosome"/>
</dbReference>
<dbReference type="Proteomes" id="UP000002673">
    <property type="component" value="Chromosome"/>
</dbReference>
<dbReference type="GO" id="GO:0005886">
    <property type="term" value="C:plasma membrane"/>
    <property type="evidence" value="ECO:0007669"/>
    <property type="project" value="UniProtKB-SubCell"/>
</dbReference>
<dbReference type="GO" id="GO:0015416">
    <property type="term" value="F:ABC-type phosphonate transporter activity"/>
    <property type="evidence" value="ECO:0007669"/>
    <property type="project" value="UniProtKB-EC"/>
</dbReference>
<dbReference type="GO" id="GO:0005524">
    <property type="term" value="F:ATP binding"/>
    <property type="evidence" value="ECO:0007669"/>
    <property type="project" value="UniProtKB-KW"/>
</dbReference>
<dbReference type="GO" id="GO:0016887">
    <property type="term" value="F:ATP hydrolysis activity"/>
    <property type="evidence" value="ECO:0007669"/>
    <property type="project" value="InterPro"/>
</dbReference>
<dbReference type="CDD" id="cd03256">
    <property type="entry name" value="ABC_PhnC_transporter"/>
    <property type="match status" value="1"/>
</dbReference>
<dbReference type="Gene3D" id="3.40.50.300">
    <property type="entry name" value="P-loop containing nucleotide triphosphate hydrolases"/>
    <property type="match status" value="1"/>
</dbReference>
<dbReference type="InterPro" id="IPR003593">
    <property type="entry name" value="AAA+_ATPase"/>
</dbReference>
<dbReference type="InterPro" id="IPR003439">
    <property type="entry name" value="ABC_transporter-like_ATP-bd"/>
</dbReference>
<dbReference type="InterPro" id="IPR017871">
    <property type="entry name" value="ABC_transporter-like_CS"/>
</dbReference>
<dbReference type="InterPro" id="IPR012693">
    <property type="entry name" value="ABC_transpr_PhnC"/>
</dbReference>
<dbReference type="InterPro" id="IPR050086">
    <property type="entry name" value="MetN_ABC_transporter-like"/>
</dbReference>
<dbReference type="InterPro" id="IPR027417">
    <property type="entry name" value="P-loop_NTPase"/>
</dbReference>
<dbReference type="NCBIfam" id="TIGR02315">
    <property type="entry name" value="ABC_phnC"/>
    <property type="match status" value="1"/>
</dbReference>
<dbReference type="NCBIfam" id="NF007438">
    <property type="entry name" value="PRK09984.1"/>
    <property type="match status" value="1"/>
</dbReference>
<dbReference type="PANTHER" id="PTHR43166">
    <property type="entry name" value="AMINO ACID IMPORT ATP-BINDING PROTEIN"/>
    <property type="match status" value="1"/>
</dbReference>
<dbReference type="PANTHER" id="PTHR43166:SF6">
    <property type="entry name" value="PHOSPHONATES IMPORT ATP-BINDING PROTEIN PHNC"/>
    <property type="match status" value="1"/>
</dbReference>
<dbReference type="Pfam" id="PF00005">
    <property type="entry name" value="ABC_tran"/>
    <property type="match status" value="1"/>
</dbReference>
<dbReference type="SMART" id="SM00382">
    <property type="entry name" value="AAA"/>
    <property type="match status" value="1"/>
</dbReference>
<dbReference type="SUPFAM" id="SSF52540">
    <property type="entry name" value="P-loop containing nucleoside triphosphate hydrolases"/>
    <property type="match status" value="1"/>
</dbReference>
<dbReference type="PROSITE" id="PS00211">
    <property type="entry name" value="ABC_TRANSPORTER_1"/>
    <property type="match status" value="1"/>
</dbReference>
<dbReference type="PROSITE" id="PS50893">
    <property type="entry name" value="ABC_TRANSPORTER_2"/>
    <property type="match status" value="1"/>
</dbReference>
<dbReference type="PROSITE" id="PS51249">
    <property type="entry name" value="PHNC"/>
    <property type="match status" value="1"/>
</dbReference>
<comment type="function">
    <text evidence="1">Part of the ABC transporter complex PhnCDE involved in phosphonates import. Responsible for energy coupling to the transport system.</text>
</comment>
<comment type="catalytic activity">
    <reaction evidence="1">
        <text>phosphonate(out) + ATP + H2O = phosphonate(in) + ADP + phosphate + H(+)</text>
        <dbReference type="Rhea" id="RHEA:18065"/>
        <dbReference type="ChEBI" id="CHEBI:15377"/>
        <dbReference type="ChEBI" id="CHEBI:15378"/>
        <dbReference type="ChEBI" id="CHEBI:16215"/>
        <dbReference type="ChEBI" id="CHEBI:30616"/>
        <dbReference type="ChEBI" id="CHEBI:43474"/>
        <dbReference type="ChEBI" id="CHEBI:456216"/>
        <dbReference type="EC" id="7.3.2.2"/>
    </reaction>
</comment>
<comment type="subunit">
    <text evidence="1">The complex is composed of two ATP-binding proteins (PhnC), two transmembrane proteins (PhnE) and a solute-binding protein (PhnD).</text>
</comment>
<comment type="subcellular location">
    <subcellularLocation>
        <location evidence="1">Cell inner membrane</location>
        <topology evidence="1">Peripheral membrane protein</topology>
    </subcellularLocation>
</comment>
<comment type="similarity">
    <text evidence="1">Belongs to the ABC transporter superfamily. Phosphonates importer (TC 3.A.1.9.1) family.</text>
</comment>
<feature type="chain" id="PRO_0000092728" description="Phosphonates import ATP-binding protein PhnC">
    <location>
        <begin position="1"/>
        <end position="262"/>
    </location>
</feature>
<feature type="domain" description="ABC transporter" evidence="1">
    <location>
        <begin position="5"/>
        <end position="253"/>
    </location>
</feature>
<feature type="binding site" evidence="1">
    <location>
        <begin position="37"/>
        <end position="44"/>
    </location>
    <ligand>
        <name>ATP</name>
        <dbReference type="ChEBI" id="CHEBI:30616"/>
    </ligand>
</feature>
<evidence type="ECO:0000255" key="1">
    <source>
        <dbReference type="HAMAP-Rule" id="MF_01713"/>
    </source>
</evidence>
<organism>
    <name type="scientific">Shigella flexneri</name>
    <dbReference type="NCBI Taxonomy" id="623"/>
    <lineage>
        <taxon>Bacteria</taxon>
        <taxon>Pseudomonadati</taxon>
        <taxon>Pseudomonadota</taxon>
        <taxon>Gammaproteobacteria</taxon>
        <taxon>Enterobacterales</taxon>
        <taxon>Enterobacteriaceae</taxon>
        <taxon>Shigella</taxon>
    </lineage>
</organism>
<name>PHNC_SHIFL</name>
<proteinExistence type="inferred from homology"/>
<sequence>MQTIIRVEKLAKTFNQHQALHAVDLNIHHSEMVALLGPSGSGKSTLLRHLSGLITGDKSAGSHIELLGRTVQREGRLARDIRKSRANTGYIFQQFNLVNRLSVLENVLIGALGSTPFWRTCFSWFTGEQKQRALQALTRVGMVHFAHQRVSTLSGGQQQRVAIARALMQQAKVILADEPIASLDPESARIVMDTLRDINQNDGITVVVTLHQVDYALRYCERIVALRQGHVFYDGSSQLFDNERFDHLYRSINRIEENAKAA</sequence>